<evidence type="ECO:0000255" key="1">
    <source>
        <dbReference type="HAMAP-Rule" id="MF_00116"/>
    </source>
</evidence>
<name>DUT_RHIR8</name>
<proteinExistence type="inferred from homology"/>
<accession>B9J7P6</accession>
<organism>
    <name type="scientific">Rhizobium rhizogenes (strain K84 / ATCC BAA-868)</name>
    <name type="common">Agrobacterium radiobacter</name>
    <dbReference type="NCBI Taxonomy" id="311403"/>
    <lineage>
        <taxon>Bacteria</taxon>
        <taxon>Pseudomonadati</taxon>
        <taxon>Pseudomonadota</taxon>
        <taxon>Alphaproteobacteria</taxon>
        <taxon>Hyphomicrobiales</taxon>
        <taxon>Rhizobiaceae</taxon>
        <taxon>Rhizobium/Agrobacterium group</taxon>
        <taxon>Rhizobium</taxon>
    </lineage>
</organism>
<sequence length="156" mass="16558">MTIHTDTRPTLNLIRLAHGRGLDLPAYETKGAAGMDLRAAIEDGTTLTLAPGKRALVPSGFIFEIPEGFEAQIRPRSGLAFKNGITCLNSPGTVDSDYRGEVKVLLINHGDEPFEITRGMRIAQVVIAPVTQVRVAEITEVSDTARGAGGFGSTGV</sequence>
<protein>
    <recommendedName>
        <fullName evidence="1">Deoxyuridine 5'-triphosphate nucleotidohydrolase</fullName>
        <shortName evidence="1">dUTPase</shortName>
        <ecNumber evidence="1">3.6.1.23</ecNumber>
    </recommendedName>
    <alternativeName>
        <fullName evidence="1">dUTP pyrophosphatase</fullName>
    </alternativeName>
</protein>
<keyword id="KW-0378">Hydrolase</keyword>
<keyword id="KW-0460">Magnesium</keyword>
<keyword id="KW-0479">Metal-binding</keyword>
<keyword id="KW-0546">Nucleotide metabolism</keyword>
<comment type="function">
    <text evidence="1">This enzyme is involved in nucleotide metabolism: it produces dUMP, the immediate precursor of thymidine nucleotides and it decreases the intracellular concentration of dUTP so that uracil cannot be incorporated into DNA.</text>
</comment>
<comment type="catalytic activity">
    <reaction evidence="1">
        <text>dUTP + H2O = dUMP + diphosphate + H(+)</text>
        <dbReference type="Rhea" id="RHEA:10248"/>
        <dbReference type="ChEBI" id="CHEBI:15377"/>
        <dbReference type="ChEBI" id="CHEBI:15378"/>
        <dbReference type="ChEBI" id="CHEBI:33019"/>
        <dbReference type="ChEBI" id="CHEBI:61555"/>
        <dbReference type="ChEBI" id="CHEBI:246422"/>
        <dbReference type="EC" id="3.6.1.23"/>
    </reaction>
</comment>
<comment type="cofactor">
    <cofactor evidence="1">
        <name>Mg(2+)</name>
        <dbReference type="ChEBI" id="CHEBI:18420"/>
    </cofactor>
</comment>
<comment type="pathway">
    <text evidence="1">Pyrimidine metabolism; dUMP biosynthesis; dUMP from dCTP (dUTP route): step 2/2.</text>
</comment>
<comment type="similarity">
    <text evidence="1">Belongs to the dUTPase family.</text>
</comment>
<feature type="chain" id="PRO_1000119222" description="Deoxyuridine 5'-triphosphate nucleotidohydrolase">
    <location>
        <begin position="1"/>
        <end position="156"/>
    </location>
</feature>
<feature type="binding site" evidence="1">
    <location>
        <begin position="76"/>
        <end position="78"/>
    </location>
    <ligand>
        <name>substrate</name>
    </ligand>
</feature>
<feature type="binding site" evidence="1">
    <location>
        <position position="89"/>
    </location>
    <ligand>
        <name>substrate</name>
    </ligand>
</feature>
<feature type="binding site" evidence="1">
    <location>
        <begin position="93"/>
        <end position="95"/>
    </location>
    <ligand>
        <name>substrate</name>
    </ligand>
</feature>
<feature type="binding site" evidence="1">
    <location>
        <position position="103"/>
    </location>
    <ligand>
        <name>substrate</name>
    </ligand>
</feature>
<reference key="1">
    <citation type="journal article" date="2009" name="J. Bacteriol.">
        <title>Genome sequences of three Agrobacterium biovars help elucidate the evolution of multichromosome genomes in bacteria.</title>
        <authorList>
            <person name="Slater S.C."/>
            <person name="Goldman B.S."/>
            <person name="Goodner B."/>
            <person name="Setubal J.C."/>
            <person name="Farrand S.K."/>
            <person name="Nester E.W."/>
            <person name="Burr T.J."/>
            <person name="Banta L."/>
            <person name="Dickerman A.W."/>
            <person name="Paulsen I."/>
            <person name="Otten L."/>
            <person name="Suen G."/>
            <person name="Welch R."/>
            <person name="Almeida N.F."/>
            <person name="Arnold F."/>
            <person name="Burton O.T."/>
            <person name="Du Z."/>
            <person name="Ewing A."/>
            <person name="Godsy E."/>
            <person name="Heisel S."/>
            <person name="Houmiel K.L."/>
            <person name="Jhaveri J."/>
            <person name="Lu J."/>
            <person name="Miller N.M."/>
            <person name="Norton S."/>
            <person name="Chen Q."/>
            <person name="Phoolcharoen W."/>
            <person name="Ohlin V."/>
            <person name="Ondrusek D."/>
            <person name="Pride N."/>
            <person name="Stricklin S.L."/>
            <person name="Sun J."/>
            <person name="Wheeler C."/>
            <person name="Wilson L."/>
            <person name="Zhu H."/>
            <person name="Wood D.W."/>
        </authorList>
    </citation>
    <scope>NUCLEOTIDE SEQUENCE [LARGE SCALE GENOMIC DNA]</scope>
    <source>
        <strain>K84 / ATCC BAA-868</strain>
    </source>
</reference>
<gene>
    <name evidence="1" type="primary">dut</name>
    <name type="ordered locus">Arad_0561</name>
</gene>
<dbReference type="EC" id="3.6.1.23" evidence="1"/>
<dbReference type="EMBL" id="CP000628">
    <property type="protein sequence ID" value="ACM25218.1"/>
    <property type="molecule type" value="Genomic_DNA"/>
</dbReference>
<dbReference type="RefSeq" id="WP_007702778.1">
    <property type="nucleotide sequence ID" value="NC_011985.1"/>
</dbReference>
<dbReference type="SMR" id="B9J7P6"/>
<dbReference type="STRING" id="311403.Arad_0561"/>
<dbReference type="GeneID" id="86850867"/>
<dbReference type="KEGG" id="ara:Arad_0561"/>
<dbReference type="eggNOG" id="COG0756">
    <property type="taxonomic scope" value="Bacteria"/>
</dbReference>
<dbReference type="HOGENOM" id="CLU_068508_1_0_5"/>
<dbReference type="UniPathway" id="UPA00610">
    <property type="reaction ID" value="UER00666"/>
</dbReference>
<dbReference type="Proteomes" id="UP000001600">
    <property type="component" value="Chromosome 1"/>
</dbReference>
<dbReference type="GO" id="GO:0004170">
    <property type="term" value="F:dUTP diphosphatase activity"/>
    <property type="evidence" value="ECO:0007669"/>
    <property type="project" value="UniProtKB-UniRule"/>
</dbReference>
<dbReference type="GO" id="GO:0000287">
    <property type="term" value="F:magnesium ion binding"/>
    <property type="evidence" value="ECO:0007669"/>
    <property type="project" value="UniProtKB-UniRule"/>
</dbReference>
<dbReference type="GO" id="GO:0006226">
    <property type="term" value="P:dUMP biosynthetic process"/>
    <property type="evidence" value="ECO:0007669"/>
    <property type="project" value="UniProtKB-UniRule"/>
</dbReference>
<dbReference type="GO" id="GO:0046081">
    <property type="term" value="P:dUTP catabolic process"/>
    <property type="evidence" value="ECO:0007669"/>
    <property type="project" value="InterPro"/>
</dbReference>
<dbReference type="CDD" id="cd07557">
    <property type="entry name" value="trimeric_dUTPase"/>
    <property type="match status" value="1"/>
</dbReference>
<dbReference type="Gene3D" id="2.70.40.10">
    <property type="match status" value="1"/>
</dbReference>
<dbReference type="HAMAP" id="MF_00116">
    <property type="entry name" value="dUTPase_bact"/>
    <property type="match status" value="1"/>
</dbReference>
<dbReference type="InterPro" id="IPR008181">
    <property type="entry name" value="dUTPase"/>
</dbReference>
<dbReference type="InterPro" id="IPR029054">
    <property type="entry name" value="dUTPase-like"/>
</dbReference>
<dbReference type="InterPro" id="IPR036157">
    <property type="entry name" value="dUTPase-like_sf"/>
</dbReference>
<dbReference type="InterPro" id="IPR033704">
    <property type="entry name" value="dUTPase_trimeric"/>
</dbReference>
<dbReference type="NCBIfam" id="TIGR00576">
    <property type="entry name" value="dut"/>
    <property type="match status" value="1"/>
</dbReference>
<dbReference type="NCBIfam" id="NF001862">
    <property type="entry name" value="PRK00601.1"/>
    <property type="match status" value="1"/>
</dbReference>
<dbReference type="PANTHER" id="PTHR11241">
    <property type="entry name" value="DEOXYURIDINE 5'-TRIPHOSPHATE NUCLEOTIDOHYDROLASE"/>
    <property type="match status" value="1"/>
</dbReference>
<dbReference type="PANTHER" id="PTHR11241:SF0">
    <property type="entry name" value="DEOXYURIDINE 5'-TRIPHOSPHATE NUCLEOTIDOHYDROLASE"/>
    <property type="match status" value="1"/>
</dbReference>
<dbReference type="Pfam" id="PF00692">
    <property type="entry name" value="dUTPase"/>
    <property type="match status" value="1"/>
</dbReference>
<dbReference type="SUPFAM" id="SSF51283">
    <property type="entry name" value="dUTPase-like"/>
    <property type="match status" value="1"/>
</dbReference>